<comment type="function">
    <text evidence="1">Has an important function as a repair enzyme for proteins that have been inactivated by oxidation. Catalyzes the reversible oxidation-reduction of methionine sulfoxide in proteins to methionine.</text>
</comment>
<comment type="catalytic activity">
    <reaction evidence="1">
        <text>L-methionyl-[protein] + [thioredoxin]-disulfide + H2O = L-methionyl-(S)-S-oxide-[protein] + [thioredoxin]-dithiol</text>
        <dbReference type="Rhea" id="RHEA:14217"/>
        <dbReference type="Rhea" id="RHEA-COMP:10698"/>
        <dbReference type="Rhea" id="RHEA-COMP:10700"/>
        <dbReference type="Rhea" id="RHEA-COMP:12313"/>
        <dbReference type="Rhea" id="RHEA-COMP:12315"/>
        <dbReference type="ChEBI" id="CHEBI:15377"/>
        <dbReference type="ChEBI" id="CHEBI:16044"/>
        <dbReference type="ChEBI" id="CHEBI:29950"/>
        <dbReference type="ChEBI" id="CHEBI:44120"/>
        <dbReference type="ChEBI" id="CHEBI:50058"/>
        <dbReference type="EC" id="1.8.4.11"/>
    </reaction>
</comment>
<comment type="catalytic activity">
    <reaction evidence="1">
        <text>[thioredoxin]-disulfide + L-methionine + H2O = L-methionine (S)-S-oxide + [thioredoxin]-dithiol</text>
        <dbReference type="Rhea" id="RHEA:19993"/>
        <dbReference type="Rhea" id="RHEA-COMP:10698"/>
        <dbReference type="Rhea" id="RHEA-COMP:10700"/>
        <dbReference type="ChEBI" id="CHEBI:15377"/>
        <dbReference type="ChEBI" id="CHEBI:29950"/>
        <dbReference type="ChEBI" id="CHEBI:50058"/>
        <dbReference type="ChEBI" id="CHEBI:57844"/>
        <dbReference type="ChEBI" id="CHEBI:58772"/>
        <dbReference type="EC" id="1.8.4.11"/>
    </reaction>
</comment>
<comment type="similarity">
    <text evidence="1">Belongs to the MsrA Met sulfoxide reductase family.</text>
</comment>
<sequence length="222" mass="24681">MWFKSAGSALPDPHDALPGRATPLQVTETHFVHGRRIRPPFPSGTARAFFGMGCFWGAERRFWTLPGVYSTAVGYAGGSTPNPTYDEVCTGRTGHAEVVLVVYEPDKVGFDALLQVFWTSHDPTQGMRQGNDVGTQYRSVIFATTPEQLQWALVSRDAYERALERAGRGGITTEIRMAPDFYYAESYHQQYLAQHPNGYCGLRGTGVECPPFRIEQSRADPI</sequence>
<organism>
    <name type="scientific">Methylococcus capsulatus (strain ATCC 33009 / NCIMB 11132 / Bath)</name>
    <dbReference type="NCBI Taxonomy" id="243233"/>
    <lineage>
        <taxon>Bacteria</taxon>
        <taxon>Pseudomonadati</taxon>
        <taxon>Pseudomonadota</taxon>
        <taxon>Gammaproteobacteria</taxon>
        <taxon>Methylococcales</taxon>
        <taxon>Methylococcaceae</taxon>
        <taxon>Methylococcus</taxon>
    </lineage>
</organism>
<feature type="chain" id="PRO_1000068339" description="Peptide methionine sulfoxide reductase MsrA">
    <location>
        <begin position="1"/>
        <end position="222"/>
    </location>
</feature>
<feature type="active site" evidence="1">
    <location>
        <position position="54"/>
    </location>
</feature>
<evidence type="ECO:0000255" key="1">
    <source>
        <dbReference type="HAMAP-Rule" id="MF_01401"/>
    </source>
</evidence>
<accession>Q602T2</accession>
<dbReference type="EC" id="1.8.4.11" evidence="1"/>
<dbReference type="EMBL" id="AE017282">
    <property type="protein sequence ID" value="AAU90892.1"/>
    <property type="molecule type" value="Genomic_DNA"/>
</dbReference>
<dbReference type="RefSeq" id="WP_010962169.1">
    <property type="nucleotide sequence ID" value="NC_002977.6"/>
</dbReference>
<dbReference type="SMR" id="Q602T2"/>
<dbReference type="STRING" id="243233.MCA2979"/>
<dbReference type="GeneID" id="88225141"/>
<dbReference type="KEGG" id="mca:MCA2979"/>
<dbReference type="eggNOG" id="COG0225">
    <property type="taxonomic scope" value="Bacteria"/>
</dbReference>
<dbReference type="HOGENOM" id="CLU_031040_10_3_6"/>
<dbReference type="Proteomes" id="UP000006821">
    <property type="component" value="Chromosome"/>
</dbReference>
<dbReference type="GO" id="GO:0005737">
    <property type="term" value="C:cytoplasm"/>
    <property type="evidence" value="ECO:0007669"/>
    <property type="project" value="TreeGrafter"/>
</dbReference>
<dbReference type="GO" id="GO:0036456">
    <property type="term" value="F:L-methionine-(S)-S-oxide reductase activity"/>
    <property type="evidence" value="ECO:0007669"/>
    <property type="project" value="TreeGrafter"/>
</dbReference>
<dbReference type="GO" id="GO:0008113">
    <property type="term" value="F:peptide-methionine (S)-S-oxide reductase activity"/>
    <property type="evidence" value="ECO:0007669"/>
    <property type="project" value="UniProtKB-UniRule"/>
</dbReference>
<dbReference type="GO" id="GO:0034599">
    <property type="term" value="P:cellular response to oxidative stress"/>
    <property type="evidence" value="ECO:0007669"/>
    <property type="project" value="TreeGrafter"/>
</dbReference>
<dbReference type="GO" id="GO:0036211">
    <property type="term" value="P:protein modification process"/>
    <property type="evidence" value="ECO:0007669"/>
    <property type="project" value="UniProtKB-UniRule"/>
</dbReference>
<dbReference type="FunFam" id="3.30.1060.10:FF:000001">
    <property type="entry name" value="Peptide methionine sulfoxide reductase MsrA"/>
    <property type="match status" value="1"/>
</dbReference>
<dbReference type="Gene3D" id="3.30.1060.10">
    <property type="entry name" value="Peptide methionine sulphoxide reductase MsrA"/>
    <property type="match status" value="1"/>
</dbReference>
<dbReference type="HAMAP" id="MF_01401">
    <property type="entry name" value="MsrA"/>
    <property type="match status" value="1"/>
</dbReference>
<dbReference type="InterPro" id="IPR002569">
    <property type="entry name" value="Met_Sox_Rdtase_MsrA_dom"/>
</dbReference>
<dbReference type="InterPro" id="IPR036509">
    <property type="entry name" value="Met_Sox_Rdtase_MsrA_sf"/>
</dbReference>
<dbReference type="InterPro" id="IPR050162">
    <property type="entry name" value="MsrA_MetSO_reductase"/>
</dbReference>
<dbReference type="NCBIfam" id="TIGR00401">
    <property type="entry name" value="msrA"/>
    <property type="match status" value="1"/>
</dbReference>
<dbReference type="PANTHER" id="PTHR42799">
    <property type="entry name" value="MITOCHONDRIAL PEPTIDE METHIONINE SULFOXIDE REDUCTASE"/>
    <property type="match status" value="1"/>
</dbReference>
<dbReference type="PANTHER" id="PTHR42799:SF2">
    <property type="entry name" value="MITOCHONDRIAL PEPTIDE METHIONINE SULFOXIDE REDUCTASE"/>
    <property type="match status" value="1"/>
</dbReference>
<dbReference type="Pfam" id="PF01625">
    <property type="entry name" value="PMSR"/>
    <property type="match status" value="1"/>
</dbReference>
<dbReference type="SUPFAM" id="SSF55068">
    <property type="entry name" value="Peptide methionine sulfoxide reductase"/>
    <property type="match status" value="1"/>
</dbReference>
<name>MSRA_METCA</name>
<keyword id="KW-0560">Oxidoreductase</keyword>
<keyword id="KW-1185">Reference proteome</keyword>
<proteinExistence type="inferred from homology"/>
<reference key="1">
    <citation type="journal article" date="2004" name="PLoS Biol.">
        <title>Genomic insights into methanotrophy: the complete genome sequence of Methylococcus capsulatus (Bath).</title>
        <authorList>
            <person name="Ward N.L."/>
            <person name="Larsen O."/>
            <person name="Sakwa J."/>
            <person name="Bruseth L."/>
            <person name="Khouri H.M."/>
            <person name="Durkin A.S."/>
            <person name="Dimitrov G."/>
            <person name="Jiang L."/>
            <person name="Scanlan D."/>
            <person name="Kang K.H."/>
            <person name="Lewis M.R."/>
            <person name="Nelson K.E."/>
            <person name="Methe B.A."/>
            <person name="Wu M."/>
            <person name="Heidelberg J.F."/>
            <person name="Paulsen I.T."/>
            <person name="Fouts D.E."/>
            <person name="Ravel J."/>
            <person name="Tettelin H."/>
            <person name="Ren Q."/>
            <person name="Read T.D."/>
            <person name="DeBoy R.T."/>
            <person name="Seshadri R."/>
            <person name="Salzberg S.L."/>
            <person name="Jensen H.B."/>
            <person name="Birkeland N.K."/>
            <person name="Nelson W.C."/>
            <person name="Dodson R.J."/>
            <person name="Grindhaug S.H."/>
            <person name="Holt I.E."/>
            <person name="Eidhammer I."/>
            <person name="Jonasen I."/>
            <person name="Vanaken S."/>
            <person name="Utterback T.R."/>
            <person name="Feldblyum T.V."/>
            <person name="Fraser C.M."/>
            <person name="Lillehaug J.R."/>
            <person name="Eisen J.A."/>
        </authorList>
    </citation>
    <scope>NUCLEOTIDE SEQUENCE [LARGE SCALE GENOMIC DNA]</scope>
    <source>
        <strain>ATCC 33009 / NCIMB 11132 / Bath</strain>
    </source>
</reference>
<protein>
    <recommendedName>
        <fullName evidence="1">Peptide methionine sulfoxide reductase MsrA</fullName>
        <shortName evidence="1">Protein-methionine-S-oxide reductase</shortName>
        <ecNumber evidence="1">1.8.4.11</ecNumber>
    </recommendedName>
    <alternativeName>
        <fullName evidence="1">Peptide-methionine (S)-S-oxide reductase</fullName>
        <shortName evidence="1">Peptide Met(O) reductase</shortName>
    </alternativeName>
</protein>
<gene>
    <name evidence="1" type="primary">msrA</name>
    <name type="ordered locus">MCA2979</name>
</gene>